<comment type="function">
    <text evidence="1">Negative regulator of class I heat shock genes (grpE-dnaK-dnaJ and groELS operons). Prevents heat-shock induction of these operons.</text>
</comment>
<comment type="similarity">
    <text evidence="1">Belongs to the HrcA family.</text>
</comment>
<gene>
    <name evidence="1" type="primary">hrcA</name>
    <name type="ordered locus">Xfasm12_1514</name>
</gene>
<name>HRCA_XYLFM</name>
<sequence length="349" mass="38597">MCASFSPTLDSRSRQLLRTLISCYIQNGEPVGSKTLAQQAGLDISPATIRNILADLEELGLLNSPHTSAGRVPTAHGYRMFVDSLVQMQPPSEDDIRRLRVEMAGGGTQALLGNASEILSAMTHFVGVVSAPRREQFVFRHIDFVPLDARQIMAILIFADNEVQNRVIEPRRVYEPGELERVSNYLNAHFIGRTLADIRTTVLCELRKAKDEMEQLLAHSLDLASQMLVPNDSEDIVVTGQTRLMALQDLSDMDRLRELFEIFASKREILQLLERTINAPGVRIFIGEETGMVSMEDISLVTAPYAAHGQVLGVLGVIGPKRMAYDRVIPLVQVVAQVLGTALEPPTMP</sequence>
<accession>B0U3K0</accession>
<evidence type="ECO:0000255" key="1">
    <source>
        <dbReference type="HAMAP-Rule" id="MF_00081"/>
    </source>
</evidence>
<protein>
    <recommendedName>
        <fullName evidence="1">Heat-inducible transcription repressor HrcA</fullName>
    </recommendedName>
</protein>
<keyword id="KW-0678">Repressor</keyword>
<keyword id="KW-0346">Stress response</keyword>
<keyword id="KW-0804">Transcription</keyword>
<keyword id="KW-0805">Transcription regulation</keyword>
<proteinExistence type="inferred from homology"/>
<feature type="chain" id="PRO_1000092840" description="Heat-inducible transcription repressor HrcA">
    <location>
        <begin position="1"/>
        <end position="349"/>
    </location>
</feature>
<reference key="1">
    <citation type="journal article" date="2010" name="J. Bacteriol.">
        <title>Whole genome sequences of two Xylella fastidiosa strains (M12 and M23) causing almond leaf scorch disease in California.</title>
        <authorList>
            <person name="Chen J."/>
            <person name="Xie G."/>
            <person name="Han S."/>
            <person name="Chertkov O."/>
            <person name="Sims D."/>
            <person name="Civerolo E.L."/>
        </authorList>
    </citation>
    <scope>NUCLEOTIDE SEQUENCE [LARGE SCALE GENOMIC DNA]</scope>
    <source>
        <strain>M12</strain>
    </source>
</reference>
<dbReference type="EMBL" id="CP000941">
    <property type="protein sequence ID" value="ACA12429.1"/>
    <property type="molecule type" value="Genomic_DNA"/>
</dbReference>
<dbReference type="RefSeq" id="WP_004085848.1">
    <property type="nucleotide sequence ID" value="NC_010513.1"/>
</dbReference>
<dbReference type="SMR" id="B0U3K0"/>
<dbReference type="KEGG" id="xfm:Xfasm12_1514"/>
<dbReference type="HOGENOM" id="CLU_050019_0_0_6"/>
<dbReference type="GO" id="GO:0003677">
    <property type="term" value="F:DNA binding"/>
    <property type="evidence" value="ECO:0007669"/>
    <property type="project" value="InterPro"/>
</dbReference>
<dbReference type="GO" id="GO:0045892">
    <property type="term" value="P:negative regulation of DNA-templated transcription"/>
    <property type="evidence" value="ECO:0007669"/>
    <property type="project" value="UniProtKB-UniRule"/>
</dbReference>
<dbReference type="Gene3D" id="3.30.450.40">
    <property type="match status" value="1"/>
</dbReference>
<dbReference type="Gene3D" id="3.30.390.60">
    <property type="entry name" value="Heat-inducible transcription repressor hrca homolog, domain 3"/>
    <property type="match status" value="1"/>
</dbReference>
<dbReference type="Gene3D" id="1.10.10.10">
    <property type="entry name" value="Winged helix-like DNA-binding domain superfamily/Winged helix DNA-binding domain"/>
    <property type="match status" value="1"/>
</dbReference>
<dbReference type="HAMAP" id="MF_00081">
    <property type="entry name" value="HrcA"/>
    <property type="match status" value="1"/>
</dbReference>
<dbReference type="InterPro" id="IPR029016">
    <property type="entry name" value="GAF-like_dom_sf"/>
</dbReference>
<dbReference type="InterPro" id="IPR002571">
    <property type="entry name" value="HrcA"/>
</dbReference>
<dbReference type="InterPro" id="IPR021153">
    <property type="entry name" value="HrcA_C"/>
</dbReference>
<dbReference type="InterPro" id="IPR036388">
    <property type="entry name" value="WH-like_DNA-bd_sf"/>
</dbReference>
<dbReference type="InterPro" id="IPR036390">
    <property type="entry name" value="WH_DNA-bd_sf"/>
</dbReference>
<dbReference type="InterPro" id="IPR005104">
    <property type="entry name" value="WHTH_HrcA_DNA-bd"/>
</dbReference>
<dbReference type="InterPro" id="IPR023120">
    <property type="entry name" value="WHTH_transcript_rep_HrcA_IDD"/>
</dbReference>
<dbReference type="NCBIfam" id="TIGR00331">
    <property type="entry name" value="hrcA"/>
    <property type="match status" value="1"/>
</dbReference>
<dbReference type="PANTHER" id="PTHR34824">
    <property type="entry name" value="HEAT-INDUCIBLE TRANSCRIPTION REPRESSOR HRCA"/>
    <property type="match status" value="1"/>
</dbReference>
<dbReference type="PANTHER" id="PTHR34824:SF1">
    <property type="entry name" value="HEAT-INDUCIBLE TRANSCRIPTION REPRESSOR HRCA"/>
    <property type="match status" value="1"/>
</dbReference>
<dbReference type="Pfam" id="PF01628">
    <property type="entry name" value="HrcA"/>
    <property type="match status" value="1"/>
</dbReference>
<dbReference type="Pfam" id="PF03444">
    <property type="entry name" value="HrcA_DNA-bdg"/>
    <property type="match status" value="1"/>
</dbReference>
<dbReference type="PIRSF" id="PIRSF005485">
    <property type="entry name" value="HrcA"/>
    <property type="match status" value="1"/>
</dbReference>
<dbReference type="SUPFAM" id="SSF55781">
    <property type="entry name" value="GAF domain-like"/>
    <property type="match status" value="1"/>
</dbReference>
<dbReference type="SUPFAM" id="SSF46785">
    <property type="entry name" value="Winged helix' DNA-binding domain"/>
    <property type="match status" value="1"/>
</dbReference>
<organism>
    <name type="scientific">Xylella fastidiosa (strain M12)</name>
    <dbReference type="NCBI Taxonomy" id="405440"/>
    <lineage>
        <taxon>Bacteria</taxon>
        <taxon>Pseudomonadati</taxon>
        <taxon>Pseudomonadota</taxon>
        <taxon>Gammaproteobacteria</taxon>
        <taxon>Lysobacterales</taxon>
        <taxon>Lysobacteraceae</taxon>
        <taxon>Xylella</taxon>
    </lineage>
</organism>